<sequence>MALPVYSLKSHIPITTIASAKMNYTPNKGMITANGRSRRIRLSPNKIVACAGEADRTFPSQSLEKTALFPDQFSEKNGTPSNFTPPNREFPPSFWNNDIINSITASHKVQTGDRKRIQTLISEIKNVFNSMGDGETSPSAYDTAWVARIPAVDGSEQPQFPQTLEWILQNQLKDGSWGEEFYFLAYDRLLATLACIITLTIWRTGNVQLHKGIEFFRKQVVRMDDEADNHRPSGFEIVFPAMLNEAKSLGLDLPYELPFIEQMVKKREAKLKMITTNVLYTIQTTLLYSLEGLHEIVDFDKIIKLQSKDGSFLGSPASTAAVFMQTGNTKCLEFLEFVLRKFRNHVPSDYPLDLFERLWVVDTVERLGIDRHFKKEIKDALDYVYSCWDERGIGWAKDSPIADIDDTAMGLRILRLHGYNVSPDVLKTFKDENGEFFCFMGQTQRGVTDMLNVYRCSQVAFPGETIMEEAKLCTERYLRNALENADAFDKWAIKKNIRGEVEYALKYPWHRSMPRLEVRSYIGNYGPNDVWLGKSLYMMPYISNEKYLELAKLDFNSVQSLHQEEIRELVRWCKSSGFTELKFTRDRVVETYFAVASSMFEPEFSTCRAVYTKISVLLVILDDLYDGYGSPDEIKLFSEAVKRWDLSLLEQMPDHMKICFLGLYNTVNEVAEEGRKTQGHDVLGYIRNLWEIQLAAFTREAEWSQGKYVPSFDEYIENAQVSIGVATILLITILFTEEDDILSHIDYGSKFLRLASLTARLANDIKTYQEERAHGEVVSAIQCYMKDRPEITEEEALKYVYGRMVNDLAELNSEYLKSNEMPQNCKRLVFDTARVAQLFTMEGDGLTYSDTMEIKEHIKKCLFEPAT</sequence>
<comment type="function">
    <text evidence="5">Involved in the biosynthesis of cis-abienol, a labdane diterpene that can be used as synthesis precursor of ambergris substitution fragance products. Bifunctional class I/II enzyme in which both the bicyclization and water capture occur in the class II active site, resulting in an intermediary labda-13-en-8-ol diphosphate, which undergoes cleavage of the diphosphate group and final deprotonation at the class I active site. No activity with copalyl diphosphate as substrate.</text>
</comment>
<comment type="catalytic activity">
    <reaction evidence="5">
        <text>8-hydroxycopalyl diphosphate = cis-abienol + diphosphate</text>
        <dbReference type="Rhea" id="RHEA:34463"/>
        <dbReference type="ChEBI" id="CHEBI:33019"/>
        <dbReference type="ChEBI" id="CHEBI:64283"/>
        <dbReference type="ChEBI" id="CHEBI:68624"/>
        <dbReference type="EC" id="4.2.3.140"/>
    </reaction>
</comment>
<comment type="catalytic activity">
    <reaction evidence="5">
        <text>(2E,6E,10E)-geranylgeranyl diphosphate + H2O = 8-hydroxycopalyl diphosphate</text>
        <dbReference type="Rhea" id="RHEA:32703"/>
        <dbReference type="ChEBI" id="CHEBI:15377"/>
        <dbReference type="ChEBI" id="CHEBI:58756"/>
        <dbReference type="ChEBI" id="CHEBI:64283"/>
        <dbReference type="EC" id="4.2.1.133"/>
    </reaction>
</comment>
<comment type="cofactor">
    <cofactor evidence="3">
        <name>Mg(2+)</name>
        <dbReference type="ChEBI" id="CHEBI:18420"/>
    </cofactor>
</comment>
<comment type="pathway">
    <text>Terpene metabolism; oleoresin biosynthesis.</text>
</comment>
<comment type="subcellular location">
    <subcellularLocation>
        <location evidence="1">Plastid</location>
        <location evidence="1">Chloroplast</location>
    </subcellularLocation>
</comment>
<comment type="domain">
    <text evidence="6">The Asp-Xaa-Asp-Asp (DXDD) motif is important for the catalytic activity in the class II active site relevant for the cyclization of GGPP. The Asp-Asp-Xaa-Xaa-Asp/Glu (DDXXD/E) motif is important for the catalytic activity in the class I active site, presumably through binding to Mg(2+).</text>
</comment>
<comment type="similarity">
    <text evidence="6">Belongs to the terpene synthase family. Tpsd subfamily.</text>
</comment>
<gene>
    <name type="primary">CAS</name>
</gene>
<protein>
    <recommendedName>
        <fullName>Bifunctional cis-abienol synthase, chloroplastic</fullName>
        <ecNumber>4.2.1.133</ecNumber>
        <ecNumber>4.2.3.140</ecNumber>
    </recommendedName>
    <alternativeName>
        <fullName>Diterpene synthase TPS4</fullName>
        <shortName>AbdiTPS4</shortName>
    </alternativeName>
</protein>
<feature type="transit peptide" description="Chloroplast" evidence="4">
    <location>
        <begin position="1"/>
        <end position="49"/>
    </location>
</feature>
<feature type="chain" id="PRO_0000423338" description="Bifunctional cis-abienol synthase, chloroplastic">
    <location>
        <begin position="50"/>
        <end position="867"/>
    </location>
</feature>
<feature type="short sequence motif" description="DXDD motif" evidence="6">
    <location>
        <begin position="403"/>
        <end position="406"/>
    </location>
</feature>
<feature type="short sequence motif" description="DDXXD motif" evidence="6">
    <location>
        <begin position="622"/>
        <end position="626"/>
    </location>
</feature>
<feature type="binding site" evidence="2">
    <location>
        <position position="270"/>
    </location>
    <ligand>
        <name>substrate</name>
    </ligand>
</feature>
<feature type="binding site" evidence="2">
    <location>
        <position position="490"/>
    </location>
    <ligand>
        <name>substrate</name>
    </ligand>
</feature>
<feature type="binding site" evidence="3">
    <location>
        <position position="622"/>
    </location>
    <ligand>
        <name>Mg(2+)</name>
        <dbReference type="ChEBI" id="CHEBI:18420"/>
        <label>1</label>
    </ligand>
</feature>
<feature type="binding site" evidence="3">
    <location>
        <position position="622"/>
    </location>
    <ligand>
        <name>Mg(2+)</name>
        <dbReference type="ChEBI" id="CHEBI:18420"/>
        <label>2</label>
    </ligand>
</feature>
<feature type="binding site" evidence="3">
    <location>
        <position position="626"/>
    </location>
    <ligand>
        <name>Mg(2+)</name>
        <dbReference type="ChEBI" id="CHEBI:18420"/>
        <label>1</label>
    </ligand>
</feature>
<feature type="binding site" evidence="3">
    <location>
        <position position="626"/>
    </location>
    <ligand>
        <name>Mg(2+)</name>
        <dbReference type="ChEBI" id="CHEBI:18420"/>
        <label>2</label>
    </ligand>
</feature>
<feature type="binding site" evidence="3">
    <location>
        <position position="763"/>
    </location>
    <ligand>
        <name>Mg(2+)</name>
        <dbReference type="ChEBI" id="CHEBI:18420"/>
        <label>3</label>
    </ligand>
</feature>
<feature type="binding site" evidence="3">
    <location>
        <position position="764"/>
    </location>
    <ligand>
        <name>Mg(2+)</name>
        <dbReference type="ChEBI" id="CHEBI:18420"/>
        <label>3</label>
    </ligand>
</feature>
<feature type="binding site" evidence="3">
    <location>
        <position position="767"/>
    </location>
    <ligand>
        <name>Mg(2+)</name>
        <dbReference type="ChEBI" id="CHEBI:18420"/>
        <label>3</label>
    </ligand>
</feature>
<feature type="binding site" evidence="3">
    <location>
        <position position="771"/>
    </location>
    <ligand>
        <name>Mg(2+)</name>
        <dbReference type="ChEBI" id="CHEBI:18420"/>
        <label>3</label>
    </ligand>
</feature>
<feature type="mutagenesis site" description="Loss of activity." evidence="5">
    <original>DID</original>
    <variation>AIA</variation>
    <location>
        <begin position="403"/>
        <end position="405"/>
    </location>
</feature>
<feature type="mutagenesis site" description="Loss of activity." evidence="5">
    <original>D</original>
    <variation>A</variation>
    <location>
        <position position="622"/>
    </location>
</feature>
<accession>H8ZM73</accession>
<keyword id="KW-0150">Chloroplast</keyword>
<keyword id="KW-0456">Lyase</keyword>
<keyword id="KW-0460">Magnesium</keyword>
<keyword id="KW-0479">Metal-binding</keyword>
<keyword id="KW-0511">Multifunctional enzyme</keyword>
<keyword id="KW-0934">Plastid</keyword>
<keyword id="KW-0809">Transit peptide</keyword>
<organism>
    <name type="scientific">Abies balsamea</name>
    <name type="common">Balsam fir</name>
    <name type="synonym">Pinus balsamea</name>
    <dbReference type="NCBI Taxonomy" id="90345"/>
    <lineage>
        <taxon>Eukaryota</taxon>
        <taxon>Viridiplantae</taxon>
        <taxon>Streptophyta</taxon>
        <taxon>Embryophyta</taxon>
        <taxon>Tracheophyta</taxon>
        <taxon>Spermatophyta</taxon>
        <taxon>Pinopsida</taxon>
        <taxon>Pinidae</taxon>
        <taxon>Conifers I</taxon>
        <taxon>Pinales</taxon>
        <taxon>Pinaceae</taxon>
        <taxon>Abies</taxon>
    </lineage>
</organism>
<name>CAS_ABIBA</name>
<evidence type="ECO:0000250" key="1"/>
<evidence type="ECO:0000250" key="2">
    <source>
        <dbReference type="UniProtKB" id="Q38802"/>
    </source>
</evidence>
<evidence type="ECO:0000250" key="3">
    <source>
        <dbReference type="UniProtKB" id="Q40577"/>
    </source>
</evidence>
<evidence type="ECO:0000255" key="4"/>
<evidence type="ECO:0000269" key="5">
    <source>
    </source>
</evidence>
<evidence type="ECO:0000305" key="6"/>
<dbReference type="EC" id="4.2.1.133"/>
<dbReference type="EC" id="4.2.3.140"/>
<dbReference type="EMBL" id="JN254808">
    <property type="protein sequence ID" value="AEL99953.1"/>
    <property type="molecule type" value="mRNA"/>
</dbReference>
<dbReference type="SMR" id="H8ZM73"/>
<dbReference type="KEGG" id="ag:AEL99953"/>
<dbReference type="BRENDA" id="4.2.3.140">
    <property type="organism ID" value="13176"/>
</dbReference>
<dbReference type="UniPathway" id="UPA00924"/>
<dbReference type="GO" id="GO:0009507">
    <property type="term" value="C:chloroplast"/>
    <property type="evidence" value="ECO:0007669"/>
    <property type="project" value="UniProtKB-SubCell"/>
</dbReference>
<dbReference type="GO" id="GO:0102161">
    <property type="term" value="F:copal-8-ol diphosphate synthase activity"/>
    <property type="evidence" value="ECO:0007669"/>
    <property type="project" value="UniProtKB-EC"/>
</dbReference>
<dbReference type="GO" id="GO:0000287">
    <property type="term" value="F:magnesium ion binding"/>
    <property type="evidence" value="ECO:0007669"/>
    <property type="project" value="InterPro"/>
</dbReference>
<dbReference type="GO" id="GO:0010333">
    <property type="term" value="F:terpene synthase activity"/>
    <property type="evidence" value="ECO:0007669"/>
    <property type="project" value="InterPro"/>
</dbReference>
<dbReference type="GO" id="GO:0016102">
    <property type="term" value="P:diterpenoid biosynthetic process"/>
    <property type="evidence" value="ECO:0007669"/>
    <property type="project" value="InterPro"/>
</dbReference>
<dbReference type="CDD" id="cd00684">
    <property type="entry name" value="Terpene_cyclase_plant_C1"/>
    <property type="match status" value="1"/>
</dbReference>
<dbReference type="FunFam" id="1.50.10.130:FF:000002">
    <property type="entry name" value="Ent-copalyl diphosphate synthase, chloroplastic"/>
    <property type="match status" value="1"/>
</dbReference>
<dbReference type="FunFam" id="1.10.600.10:FF:000005">
    <property type="entry name" value="Ent-kaur-16-ene synthase, chloroplastic"/>
    <property type="match status" value="1"/>
</dbReference>
<dbReference type="Gene3D" id="1.50.10.160">
    <property type="match status" value="1"/>
</dbReference>
<dbReference type="Gene3D" id="1.10.600.10">
    <property type="entry name" value="Farnesyl Diphosphate Synthase"/>
    <property type="match status" value="1"/>
</dbReference>
<dbReference type="Gene3D" id="1.50.10.130">
    <property type="entry name" value="Terpene synthase, N-terminal domain"/>
    <property type="match status" value="1"/>
</dbReference>
<dbReference type="InterPro" id="IPR008949">
    <property type="entry name" value="Isoprenoid_synthase_dom_sf"/>
</dbReference>
<dbReference type="InterPro" id="IPR034741">
    <property type="entry name" value="Terpene_cyclase-like_1_C"/>
</dbReference>
<dbReference type="InterPro" id="IPR044814">
    <property type="entry name" value="Terpene_cyclase_plant_C1"/>
</dbReference>
<dbReference type="InterPro" id="IPR001906">
    <property type="entry name" value="Terpene_synth_N"/>
</dbReference>
<dbReference type="InterPro" id="IPR036965">
    <property type="entry name" value="Terpene_synth_N_sf"/>
</dbReference>
<dbReference type="InterPro" id="IPR050148">
    <property type="entry name" value="Terpene_synthase-like"/>
</dbReference>
<dbReference type="InterPro" id="IPR005630">
    <property type="entry name" value="Terpene_synthase_metal-bd"/>
</dbReference>
<dbReference type="InterPro" id="IPR008930">
    <property type="entry name" value="Terpenoid_cyclase/PrenylTrfase"/>
</dbReference>
<dbReference type="PANTHER" id="PTHR31739:SF25">
    <property type="entry name" value="(E,E)-GERANYLLINALOOL SYNTHASE"/>
    <property type="match status" value="1"/>
</dbReference>
<dbReference type="PANTHER" id="PTHR31739">
    <property type="entry name" value="ENT-COPALYL DIPHOSPHATE SYNTHASE, CHLOROPLASTIC"/>
    <property type="match status" value="1"/>
</dbReference>
<dbReference type="Pfam" id="PF01397">
    <property type="entry name" value="Terpene_synth"/>
    <property type="match status" value="1"/>
</dbReference>
<dbReference type="Pfam" id="PF03936">
    <property type="entry name" value="Terpene_synth_C"/>
    <property type="match status" value="1"/>
</dbReference>
<dbReference type="SFLD" id="SFLDS00005">
    <property type="entry name" value="Isoprenoid_Synthase_Type_I"/>
    <property type="match status" value="1"/>
</dbReference>
<dbReference type="SFLD" id="SFLDG01019">
    <property type="entry name" value="Terpene_Cyclase_Like_1_C_Termi"/>
    <property type="match status" value="1"/>
</dbReference>
<dbReference type="SFLD" id="SFLDG01014">
    <property type="entry name" value="Terpene_Cyclase_Like_1_N-term"/>
    <property type="match status" value="1"/>
</dbReference>
<dbReference type="SFLD" id="SFLDG01605">
    <property type="entry name" value="Terpene_Cyclase_Like_1_N-term"/>
    <property type="match status" value="1"/>
</dbReference>
<dbReference type="SUPFAM" id="SSF48239">
    <property type="entry name" value="Terpenoid cyclases/Protein prenyltransferases"/>
    <property type="match status" value="2"/>
</dbReference>
<dbReference type="SUPFAM" id="SSF48576">
    <property type="entry name" value="Terpenoid synthases"/>
    <property type="match status" value="1"/>
</dbReference>
<proteinExistence type="evidence at protein level"/>
<reference key="1">
    <citation type="journal article" date="2012" name="J. Biol. Chem.">
        <title>Bifunctional cis-abienol synthase from Abies balsamea discovered by transcriptome sequencing and its implications for diterpenoid fragrance production.</title>
        <authorList>
            <person name="Zerbe P."/>
            <person name="Chiang A."/>
            <person name="Yuen M."/>
            <person name="Hamberger B."/>
            <person name="Hamberger B."/>
            <person name="Draper J.A."/>
            <person name="Britton R."/>
            <person name="Bohlmann J."/>
        </authorList>
    </citation>
    <scope>NUCLEOTIDE SEQUENCE [MRNA]</scope>
    <scope>FUNCTION</scope>
    <scope>CATALYTIC ACTIVITY</scope>
    <scope>MUTAGENESIS OF 403-ASP--ASP-405 AND ASP-622</scope>
    <scope>3D-STRUCTURE MODELING</scope>
</reference>